<evidence type="ECO:0000250" key="1">
    <source>
        <dbReference type="UniProtKB" id="P00558"/>
    </source>
</evidence>
<evidence type="ECO:0000250" key="2">
    <source>
        <dbReference type="UniProtKB" id="Q7SIB7"/>
    </source>
</evidence>
<evidence type="ECO:0000255" key="3"/>
<evidence type="ECO:0000305" key="4"/>
<organism>
    <name type="scientific">Spinacia oleracea</name>
    <name type="common">Spinach</name>
    <dbReference type="NCBI Taxonomy" id="3562"/>
    <lineage>
        <taxon>Eukaryota</taxon>
        <taxon>Viridiplantae</taxon>
        <taxon>Streptophyta</taxon>
        <taxon>Embryophyta</taxon>
        <taxon>Tracheophyta</taxon>
        <taxon>Spermatophyta</taxon>
        <taxon>Magnoliopsida</taxon>
        <taxon>eudicotyledons</taxon>
        <taxon>Gunneridae</taxon>
        <taxon>Pentapetalae</taxon>
        <taxon>Caryophyllales</taxon>
        <taxon>Chenopodiaceae</taxon>
        <taxon>Chenopodioideae</taxon>
        <taxon>Anserineae</taxon>
        <taxon>Spinacia</taxon>
    </lineage>
</organism>
<protein>
    <recommendedName>
        <fullName>Phosphoglycerate kinase, chloroplastic</fullName>
        <ecNumber evidence="1">2.7.2.3</ecNumber>
    </recommendedName>
</protein>
<proteinExistence type="evidence at transcript level"/>
<name>PGKH_SPIOL</name>
<accession>P29409</accession>
<feature type="transit peptide" description="Chloroplast" evidence="3">
    <location>
        <begin position="1" status="less than"/>
        <end position="28"/>
    </location>
</feature>
<feature type="chain" id="PRO_0000023891" description="Phosphoglycerate kinase, chloroplastic">
    <location>
        <begin position="29"/>
        <end position="433"/>
    </location>
</feature>
<feature type="binding site" evidence="1">
    <location>
        <position position="51"/>
    </location>
    <ligand>
        <name>(2R)-3-phosphoglycerate</name>
        <dbReference type="ChEBI" id="CHEBI:58272"/>
    </ligand>
</feature>
<feature type="binding site" evidence="2">
    <location>
        <position position="52"/>
    </location>
    <ligand>
        <name>(2R)-3-phosphoglycerate</name>
        <dbReference type="ChEBI" id="CHEBI:58272"/>
    </ligand>
</feature>
<feature type="binding site" evidence="2">
    <location>
        <position position="54"/>
    </location>
    <ligand>
        <name>(2R)-3-phosphoglycerate</name>
        <dbReference type="ChEBI" id="CHEBI:58272"/>
    </ligand>
</feature>
<feature type="binding site" evidence="2">
    <location>
        <position position="68"/>
    </location>
    <ligand>
        <name>(2R)-3-phosphoglycerate</name>
        <dbReference type="ChEBI" id="CHEBI:58272"/>
    </ligand>
</feature>
<feature type="binding site" evidence="1">
    <location>
        <position position="90"/>
    </location>
    <ligand>
        <name>(2R)-3-phosphoglycerate</name>
        <dbReference type="ChEBI" id="CHEBI:58272"/>
    </ligand>
</feature>
<feature type="binding site" evidence="2">
    <location>
        <position position="91"/>
    </location>
    <ligand>
        <name>(2R)-3-phosphoglycerate</name>
        <dbReference type="ChEBI" id="CHEBI:58272"/>
    </ligand>
</feature>
<feature type="binding site" evidence="1">
    <location>
        <position position="93"/>
    </location>
    <ligand>
        <name>(2R)-3-phosphoglycerate</name>
        <dbReference type="ChEBI" id="CHEBI:58272"/>
    </ligand>
</feature>
<feature type="binding site" evidence="2">
    <location>
        <position position="94"/>
    </location>
    <ligand>
        <name>(2R)-3-phosphoglycerate</name>
        <dbReference type="ChEBI" id="CHEBI:58272"/>
    </ligand>
</feature>
<feature type="binding site" evidence="2">
    <location>
        <position position="149"/>
    </location>
    <ligand>
        <name>(2R)-3-phosphoglycerate</name>
        <dbReference type="ChEBI" id="CHEBI:58272"/>
    </ligand>
</feature>
<feature type="binding site" evidence="1">
    <location>
        <position position="181"/>
    </location>
    <ligand>
        <name>(2R)-3-phosphoglycerate</name>
        <dbReference type="ChEBI" id="CHEBI:58272"/>
    </ligand>
</feature>
<feature type="binding site" evidence="2">
    <location>
        <position position="182"/>
    </location>
    <ligand>
        <name>(2R)-3-phosphoglycerate</name>
        <dbReference type="ChEBI" id="CHEBI:58272"/>
    </ligand>
</feature>
<feature type="binding site" evidence="1">
    <location>
        <position position="227"/>
    </location>
    <ligand>
        <name>ADP</name>
        <dbReference type="ChEBI" id="CHEBI:456216"/>
    </ligand>
</feature>
<feature type="binding site" evidence="1">
    <location>
        <position position="227"/>
    </location>
    <ligand>
        <name>CDP</name>
        <dbReference type="ChEBI" id="CHEBI:58069"/>
    </ligand>
</feature>
<feature type="binding site" evidence="2">
    <location>
        <position position="229"/>
    </location>
    <ligand>
        <name>AMP</name>
        <dbReference type="ChEBI" id="CHEBI:456215"/>
    </ligand>
</feature>
<feature type="binding site" evidence="2">
    <location>
        <position position="233"/>
    </location>
    <ligand>
        <name>AMP</name>
        <dbReference type="ChEBI" id="CHEBI:456215"/>
    </ligand>
</feature>
<feature type="binding site" evidence="2">
    <location>
        <position position="233"/>
    </location>
    <ligand>
        <name>ATP</name>
        <dbReference type="ChEBI" id="CHEBI:30616"/>
    </ligand>
</feature>
<feature type="binding site" evidence="1">
    <location>
        <position position="251"/>
    </location>
    <ligand>
        <name>ADP</name>
        <dbReference type="ChEBI" id="CHEBI:456216"/>
    </ligand>
</feature>
<feature type="binding site" evidence="1">
    <location>
        <position position="251"/>
    </location>
    <ligand>
        <name>CDP</name>
        <dbReference type="ChEBI" id="CHEBI:58069"/>
    </ligand>
</feature>
<feature type="binding site" evidence="2">
    <location>
        <position position="252"/>
    </location>
    <ligand>
        <name>AMP</name>
        <dbReference type="ChEBI" id="CHEBI:456215"/>
    </ligand>
</feature>
<feature type="binding site" evidence="2">
    <location>
        <position position="252"/>
    </location>
    <ligand>
        <name>ATP</name>
        <dbReference type="ChEBI" id="CHEBI:30616"/>
    </ligand>
</feature>
<feature type="binding site" evidence="2">
    <location>
        <position position="324"/>
    </location>
    <ligand>
        <name>AMP</name>
        <dbReference type="ChEBI" id="CHEBI:456215"/>
    </ligand>
</feature>
<feature type="binding site" evidence="2">
    <location>
        <position position="324"/>
    </location>
    <ligand>
        <name>ATP</name>
        <dbReference type="ChEBI" id="CHEBI:30616"/>
    </ligand>
</feature>
<feature type="binding site" evidence="1">
    <location>
        <position position="349"/>
    </location>
    <ligand>
        <name>CDP</name>
        <dbReference type="ChEBI" id="CHEBI:58069"/>
    </ligand>
</feature>
<feature type="binding site" evidence="1">
    <location>
        <position position="354"/>
    </location>
    <ligand>
        <name>ADP</name>
        <dbReference type="ChEBI" id="CHEBI:456216"/>
    </ligand>
</feature>
<feature type="binding site" evidence="1">
    <location>
        <position position="354"/>
    </location>
    <ligand>
        <name>CDP</name>
        <dbReference type="ChEBI" id="CHEBI:58069"/>
    </ligand>
</feature>
<feature type="binding site" evidence="2">
    <location>
        <position position="355"/>
    </location>
    <ligand>
        <name>AMP</name>
        <dbReference type="ChEBI" id="CHEBI:456215"/>
    </ligand>
</feature>
<feature type="binding site" evidence="2">
    <location>
        <position position="355"/>
    </location>
    <ligand>
        <name>ATP</name>
        <dbReference type="ChEBI" id="CHEBI:30616"/>
    </ligand>
</feature>
<feature type="binding site" evidence="2">
    <location>
        <position position="386"/>
    </location>
    <ligand>
        <name>ATP</name>
        <dbReference type="ChEBI" id="CHEBI:30616"/>
    </ligand>
</feature>
<feature type="binding site" evidence="2">
    <location>
        <position position="386"/>
    </location>
    <ligand>
        <name>Mg(2+)</name>
        <dbReference type="ChEBI" id="CHEBI:18420"/>
    </ligand>
</feature>
<feature type="binding site" evidence="2">
    <location>
        <position position="387"/>
    </location>
    <ligand>
        <name>ATP</name>
        <dbReference type="ChEBI" id="CHEBI:30616"/>
    </ligand>
</feature>
<feature type="non-terminal residue">
    <location>
        <position position="1"/>
    </location>
</feature>
<sequence>GASFSLHVLSKINSYKSQSTKPIRGVASMAKKSVGDLTSADLKGKKVFVRADLNVPLDDSQNITDDTRIRAAIPTIKHLINNGAKVILSSHLGRPKGVTPKFSLAPLVPRLSELLGLQVVKADDCIGPDVEKLVAELPEGGVLLLENVRFYKEEEKNDPEFAKKLASLADLYVNDAFGTAHRAHASTEGVTKFLKPSVAGFLLQKELDYLVGAVSNPKRPFAAIVGGSKVSSKIGVIESLLEKCDILLLGGGMIFTFYKAQGMSVGSSLVEEDKLDLATSLLAKAKEKGVSLLLPTDVVIADKFAADADSKIVPASGIPDGWMGLDIGPDSIKTFSEALDTTQTVIWNGPMGVFEFEKFAAGTEAIAKKLEEISKKGATTIIGGGDSVAAVEKVGVAEAMSHISTGGGASLELLEGKQLPGVLALNEADPVPV</sequence>
<reference key="1">
    <citation type="journal article" date="1993" name="Plant Physiol.">
        <title>Sequence of mature phosphoglycerate kinase from spinach chloroplasts.</title>
        <authorList>
            <person name="Bertsch U."/>
            <person name="Schlicher T.B."/>
            <person name="Schroeder I."/>
            <person name="Soll J."/>
        </authorList>
    </citation>
    <scope>NUCLEOTIDE SEQUENCE [MRNA]</scope>
    <source>
        <tissue>Seedling</tissue>
    </source>
</reference>
<comment type="catalytic activity">
    <reaction evidence="1">
        <text>(2R)-3-phosphoglycerate + ATP = (2R)-3-phospho-glyceroyl phosphate + ADP</text>
        <dbReference type="Rhea" id="RHEA:14801"/>
        <dbReference type="ChEBI" id="CHEBI:30616"/>
        <dbReference type="ChEBI" id="CHEBI:57604"/>
        <dbReference type="ChEBI" id="CHEBI:58272"/>
        <dbReference type="ChEBI" id="CHEBI:456216"/>
        <dbReference type="EC" id="2.7.2.3"/>
    </reaction>
</comment>
<comment type="cofactor">
    <cofactor evidence="1">
        <name>Mg(2+)</name>
        <dbReference type="ChEBI" id="CHEBI:18420"/>
    </cofactor>
</comment>
<comment type="pathway">
    <text>Carbohydrate biosynthesis; Calvin cycle.</text>
</comment>
<comment type="subunit">
    <text>Monomer.</text>
</comment>
<comment type="subcellular location">
    <subcellularLocation>
        <location>Plastid</location>
        <location>Chloroplast</location>
    </subcellularLocation>
</comment>
<comment type="similarity">
    <text evidence="4">Belongs to the phosphoglycerate kinase family.</text>
</comment>
<dbReference type="EC" id="2.7.2.3" evidence="1"/>
<dbReference type="EMBL" id="X68430">
    <property type="protein sequence ID" value="CAA48479.1"/>
    <property type="molecule type" value="mRNA"/>
</dbReference>
<dbReference type="PIR" id="S26623">
    <property type="entry name" value="S26623"/>
</dbReference>
<dbReference type="SMR" id="P29409"/>
<dbReference type="BioCyc" id="MetaCyc:MONOMER-12711"/>
<dbReference type="SABIO-RK" id="P29409"/>
<dbReference type="UniPathway" id="UPA00116"/>
<dbReference type="Proteomes" id="UP001155700">
    <property type="component" value="Unplaced"/>
</dbReference>
<dbReference type="GO" id="GO:0009507">
    <property type="term" value="C:chloroplast"/>
    <property type="evidence" value="ECO:0007669"/>
    <property type="project" value="UniProtKB-SubCell"/>
</dbReference>
<dbReference type="GO" id="GO:0005829">
    <property type="term" value="C:cytosol"/>
    <property type="evidence" value="ECO:0000318"/>
    <property type="project" value="GO_Central"/>
</dbReference>
<dbReference type="GO" id="GO:0043531">
    <property type="term" value="F:ADP binding"/>
    <property type="evidence" value="ECO:0000318"/>
    <property type="project" value="GO_Central"/>
</dbReference>
<dbReference type="GO" id="GO:0005524">
    <property type="term" value="F:ATP binding"/>
    <property type="evidence" value="ECO:0000318"/>
    <property type="project" value="GO_Central"/>
</dbReference>
<dbReference type="GO" id="GO:0046872">
    <property type="term" value="F:metal ion binding"/>
    <property type="evidence" value="ECO:0007669"/>
    <property type="project" value="UniProtKB-KW"/>
</dbReference>
<dbReference type="GO" id="GO:0004618">
    <property type="term" value="F:phosphoglycerate kinase activity"/>
    <property type="evidence" value="ECO:0000318"/>
    <property type="project" value="GO_Central"/>
</dbReference>
<dbReference type="GO" id="GO:0006094">
    <property type="term" value="P:gluconeogenesis"/>
    <property type="evidence" value="ECO:0000318"/>
    <property type="project" value="GO_Central"/>
</dbReference>
<dbReference type="GO" id="GO:0006096">
    <property type="term" value="P:glycolytic process"/>
    <property type="evidence" value="ECO:0000318"/>
    <property type="project" value="GO_Central"/>
</dbReference>
<dbReference type="GO" id="GO:0019253">
    <property type="term" value="P:reductive pentose-phosphate cycle"/>
    <property type="evidence" value="ECO:0007669"/>
    <property type="project" value="UniProtKB-UniPathway"/>
</dbReference>
<dbReference type="CDD" id="cd00318">
    <property type="entry name" value="Phosphoglycerate_kinase"/>
    <property type="match status" value="1"/>
</dbReference>
<dbReference type="FunFam" id="3.40.50.1260:FF:000003">
    <property type="entry name" value="Phosphoglycerate kinase"/>
    <property type="match status" value="1"/>
</dbReference>
<dbReference type="FunFam" id="3.40.50.1260:FF:000006">
    <property type="entry name" value="Phosphoglycerate kinase"/>
    <property type="match status" value="1"/>
</dbReference>
<dbReference type="Gene3D" id="3.40.50.1260">
    <property type="entry name" value="Phosphoglycerate kinase, N-terminal domain"/>
    <property type="match status" value="2"/>
</dbReference>
<dbReference type="HAMAP" id="MF_00145">
    <property type="entry name" value="Phosphoglyc_kinase"/>
    <property type="match status" value="1"/>
</dbReference>
<dbReference type="InterPro" id="IPR001576">
    <property type="entry name" value="Phosphoglycerate_kinase"/>
</dbReference>
<dbReference type="InterPro" id="IPR015911">
    <property type="entry name" value="Phosphoglycerate_kinase_CS"/>
</dbReference>
<dbReference type="InterPro" id="IPR015824">
    <property type="entry name" value="Phosphoglycerate_kinase_N"/>
</dbReference>
<dbReference type="InterPro" id="IPR036043">
    <property type="entry name" value="Phosphoglycerate_kinase_sf"/>
</dbReference>
<dbReference type="PANTHER" id="PTHR11406">
    <property type="entry name" value="PHOSPHOGLYCERATE KINASE"/>
    <property type="match status" value="1"/>
</dbReference>
<dbReference type="PANTHER" id="PTHR11406:SF23">
    <property type="entry name" value="PHOSPHOGLYCERATE KINASE 1, CHLOROPLASTIC-RELATED"/>
    <property type="match status" value="1"/>
</dbReference>
<dbReference type="Pfam" id="PF00162">
    <property type="entry name" value="PGK"/>
    <property type="match status" value="1"/>
</dbReference>
<dbReference type="PIRSF" id="PIRSF000724">
    <property type="entry name" value="Pgk"/>
    <property type="match status" value="1"/>
</dbReference>
<dbReference type="PRINTS" id="PR00477">
    <property type="entry name" value="PHGLYCKINASE"/>
</dbReference>
<dbReference type="SUPFAM" id="SSF53748">
    <property type="entry name" value="Phosphoglycerate kinase"/>
    <property type="match status" value="1"/>
</dbReference>
<dbReference type="PROSITE" id="PS00111">
    <property type="entry name" value="PGLYCERATE_KINASE"/>
    <property type="match status" value="1"/>
</dbReference>
<keyword id="KW-0067">ATP-binding</keyword>
<keyword id="KW-0113">Calvin cycle</keyword>
<keyword id="KW-0150">Chloroplast</keyword>
<keyword id="KW-0418">Kinase</keyword>
<keyword id="KW-0460">Magnesium</keyword>
<keyword id="KW-0479">Metal-binding</keyword>
<keyword id="KW-0547">Nucleotide-binding</keyword>
<keyword id="KW-0934">Plastid</keyword>
<keyword id="KW-1185">Reference proteome</keyword>
<keyword id="KW-0808">Transferase</keyword>
<keyword id="KW-0809">Transit peptide</keyword>